<protein>
    <recommendedName>
        <fullName>Homocitrate synthase</fullName>
        <ecNumber>2.3.3.14</ecNumber>
    </recommendedName>
</protein>
<dbReference type="EC" id="2.3.3.14"/>
<dbReference type="EMBL" id="U53363">
    <property type="protein sequence ID" value="AAB36875.1"/>
    <property type="molecule type" value="Genomic_DNA"/>
</dbReference>
<dbReference type="SMR" id="P54610"/>
<dbReference type="GO" id="GO:0004410">
    <property type="term" value="F:homocitrate synthase activity"/>
    <property type="evidence" value="ECO:0007669"/>
    <property type="project" value="UniProtKB-EC"/>
</dbReference>
<dbReference type="GO" id="GO:0009058">
    <property type="term" value="P:biosynthetic process"/>
    <property type="evidence" value="ECO:0007669"/>
    <property type="project" value="UniProtKB-ARBA"/>
</dbReference>
<dbReference type="GO" id="GO:0019752">
    <property type="term" value="P:carboxylic acid metabolic process"/>
    <property type="evidence" value="ECO:0007669"/>
    <property type="project" value="InterPro"/>
</dbReference>
<dbReference type="GO" id="GO:0009399">
    <property type="term" value="P:nitrogen fixation"/>
    <property type="evidence" value="ECO:0007669"/>
    <property type="project" value="UniProtKB-KW"/>
</dbReference>
<dbReference type="CDD" id="cd07939">
    <property type="entry name" value="DRE_TIM_NifV"/>
    <property type="match status" value="1"/>
</dbReference>
<dbReference type="Gene3D" id="1.10.238.260">
    <property type="match status" value="1"/>
</dbReference>
<dbReference type="Gene3D" id="3.20.20.70">
    <property type="entry name" value="Aldolase class I"/>
    <property type="match status" value="1"/>
</dbReference>
<dbReference type="InterPro" id="IPR002034">
    <property type="entry name" value="AIPM/Hcit_synth_CS"/>
</dbReference>
<dbReference type="InterPro" id="IPR013785">
    <property type="entry name" value="Aldolase_TIM"/>
</dbReference>
<dbReference type="InterPro" id="IPR054691">
    <property type="entry name" value="LeuA/HCS_post-cat"/>
</dbReference>
<dbReference type="InterPro" id="IPR013477">
    <property type="entry name" value="NifV/FrbC"/>
</dbReference>
<dbReference type="InterPro" id="IPR000891">
    <property type="entry name" value="PYR_CT"/>
</dbReference>
<dbReference type="NCBIfam" id="TIGR02660">
    <property type="entry name" value="nifV_homocitr"/>
    <property type="match status" value="1"/>
</dbReference>
<dbReference type="PANTHER" id="PTHR42880">
    <property type="entry name" value="HOMOCITRATE SYNTHASE"/>
    <property type="match status" value="1"/>
</dbReference>
<dbReference type="PANTHER" id="PTHR42880:SF1">
    <property type="entry name" value="ISOPROPYLMALATE_HOMOCITRATE_CITRAMALATE SYNTHASE FAMILY PROTEIN"/>
    <property type="match status" value="1"/>
</dbReference>
<dbReference type="Pfam" id="PF22617">
    <property type="entry name" value="HCS_D2"/>
    <property type="match status" value="1"/>
</dbReference>
<dbReference type="Pfam" id="PF00682">
    <property type="entry name" value="HMGL-like"/>
    <property type="match status" value="1"/>
</dbReference>
<dbReference type="SUPFAM" id="SSF51569">
    <property type="entry name" value="Aldolase"/>
    <property type="match status" value="1"/>
</dbReference>
<dbReference type="PROSITE" id="PS00815">
    <property type="entry name" value="AIPM_HOMOCIT_SYNTH_1"/>
    <property type="match status" value="1"/>
</dbReference>
<dbReference type="PROSITE" id="PS00816">
    <property type="entry name" value="AIPM_HOMOCIT_SYNTH_2"/>
    <property type="match status" value="1"/>
</dbReference>
<dbReference type="PROSITE" id="PS50991">
    <property type="entry name" value="PYR_CT"/>
    <property type="match status" value="1"/>
</dbReference>
<comment type="function">
    <text>This protein is a Fe-Mo-cofactor biosynthetic component.</text>
</comment>
<comment type="catalytic activity">
    <reaction>
        <text>acetyl-CoA + 2-oxoglutarate + H2O = (2R)-homocitrate + CoA + H(+)</text>
        <dbReference type="Rhea" id="RHEA:12929"/>
        <dbReference type="ChEBI" id="CHEBI:15377"/>
        <dbReference type="ChEBI" id="CHEBI:15378"/>
        <dbReference type="ChEBI" id="CHEBI:16810"/>
        <dbReference type="ChEBI" id="CHEBI:57287"/>
        <dbReference type="ChEBI" id="CHEBI:57288"/>
        <dbReference type="ChEBI" id="CHEBI:58884"/>
        <dbReference type="EC" id="2.3.3.14"/>
    </reaction>
</comment>
<comment type="similarity">
    <text evidence="3">Belongs to the alpha-IPM synthase/homocitrate synthase family.</text>
</comment>
<accession>P54610</accession>
<name>NIFV_FRASP</name>
<evidence type="ECO:0000255" key="1">
    <source>
        <dbReference type="PROSITE-ProRule" id="PRU01151"/>
    </source>
</evidence>
<evidence type="ECO:0000256" key="2">
    <source>
        <dbReference type="SAM" id="MobiDB-lite"/>
    </source>
</evidence>
<evidence type="ECO:0000305" key="3"/>
<proteinExistence type="inferred from homology"/>
<reference key="1">
    <citation type="submission" date="1996-04" db="EMBL/GenBank/DDBJ databases">
        <authorList>
            <person name="Oh B."/>
            <person name="Twigg P."/>
            <person name="Hong J."/>
            <person name="Mullin B."/>
            <person name="An C.S."/>
        </authorList>
    </citation>
    <scope>NUCLEOTIDE SEQUENCE [GENOMIC DNA]</scope>
</reference>
<sequence length="401" mass="43158">MTVRETRFPSSSATATQPDAVVRFCDTTLRDGEQAPGVAFTAAEKLAIAGALDAIGVHQIEAGIPGMGVTERDVLREILATDPKAEIVGWCRADHRDVEAAASCGLVTAHLTIPVSDLHLKSKLERDRAWARRRVRDCVVDGTDRGMRVSVGFEDASRADDAFVTDLAGELRDVGVTRLRWADTVGLLDPVSAYDRLGRLVRAVPGPWEIHAHDDFGLATANTIAAVQAGFTWVSTTVLGLGERAGNAPIEEVAMALRHLLKLPIDLDTTSFRTLAQLVVGWPLPAGKKAVVGESVFAHESGIHVHGILRHPATYEPFDPEVGGRRRLTVGKHSGRASLRHALEQCGITAEESELEPLVEQVRLAATRHKRGLDSRDLPGTSRAGRDAGPRAGTPTREEPV</sequence>
<organism>
    <name type="scientific">Frankia sp. (strain FaC1)</name>
    <dbReference type="NCBI Taxonomy" id="1857"/>
    <lineage>
        <taxon>Bacteria</taxon>
        <taxon>Bacillati</taxon>
        <taxon>Actinomycetota</taxon>
        <taxon>Actinomycetes</taxon>
        <taxon>Frankiales</taxon>
        <taxon>Frankiaceae</taxon>
        <taxon>Frankia</taxon>
    </lineage>
</organism>
<gene>
    <name type="primary">nifV</name>
</gene>
<feature type="chain" id="PRO_0000140463" description="Homocitrate synthase">
    <location>
        <begin position="1"/>
        <end position="401"/>
    </location>
</feature>
<feature type="domain" description="Pyruvate carboxyltransferase" evidence="1">
    <location>
        <begin position="22"/>
        <end position="271"/>
    </location>
</feature>
<feature type="region of interest" description="Disordered" evidence="2">
    <location>
        <begin position="367"/>
        <end position="401"/>
    </location>
</feature>
<keyword id="KW-0535">Nitrogen fixation</keyword>
<keyword id="KW-0808">Transferase</keyword>